<name>A424_LOXLA</name>
<proteinExistence type="evidence at transcript level"/>
<reference key="1">
    <citation type="journal article" date="2009" name="Mol. Biol. Evol.">
        <title>Molecular evolution, functional variation, and proposed nomenclature of the gene family that includes sphingomyelinase D in sicariid spider venoms.</title>
        <authorList>
            <person name="Binford G.J."/>
            <person name="Bodner M.R."/>
            <person name="Cordes M.H."/>
            <person name="Baldwin K.L."/>
            <person name="Rynerson M.R."/>
            <person name="Burns S.N."/>
            <person name="Zobel-Thropp P.A."/>
        </authorList>
    </citation>
    <scope>NUCLEOTIDE SEQUENCE [MRNA]</scope>
    <scope>NOMENCLATURE</scope>
    <source>
        <tissue>Venom gland</tissue>
    </source>
</reference>
<accession>C0JB28</accession>
<organism>
    <name type="scientific">Loxosceles laeta</name>
    <name type="common">South American recluse spider</name>
    <name type="synonym">Scytodes laeta</name>
    <dbReference type="NCBI Taxonomy" id="58217"/>
    <lineage>
        <taxon>Eukaryota</taxon>
        <taxon>Metazoa</taxon>
        <taxon>Ecdysozoa</taxon>
        <taxon>Arthropoda</taxon>
        <taxon>Chelicerata</taxon>
        <taxon>Arachnida</taxon>
        <taxon>Araneae</taxon>
        <taxon>Araneomorphae</taxon>
        <taxon>Haplogynae</taxon>
        <taxon>Scytodoidea</taxon>
        <taxon>Sicariidae</taxon>
        <taxon>Loxosceles</taxon>
    </lineage>
</organism>
<protein>
    <recommendedName>
        <fullName evidence="6">Dermonecrotic toxin LlSicTox-alphaIV2iv</fullName>
        <ecNumber evidence="4">4.6.1.-</ecNumber>
    </recommendedName>
    <alternativeName>
        <fullName>Phospholipase D</fullName>
        <shortName>PLD</shortName>
    </alternativeName>
    <alternativeName>
        <fullName>Sphingomyelin phosphodiesterase D</fullName>
        <shortName>SMD</shortName>
        <shortName>SMase D</shortName>
        <shortName>Sphingomyelinase D</shortName>
    </alternativeName>
</protein>
<feature type="chain" id="PRO_0000392842" description="Dermonecrotic toxin LlSicTox-alphaIV2iv">
    <location>
        <begin position="1" status="less than"/>
        <end position="276"/>
    </location>
</feature>
<feature type="active site" evidence="5">
    <location>
        <position position="5"/>
    </location>
</feature>
<feature type="active site" description="Nucleophile" evidence="5">
    <location>
        <position position="41"/>
    </location>
</feature>
<feature type="binding site" evidence="5">
    <location>
        <position position="25"/>
    </location>
    <ligand>
        <name>Mg(2+)</name>
        <dbReference type="ChEBI" id="CHEBI:18420"/>
    </ligand>
</feature>
<feature type="binding site" evidence="5">
    <location>
        <position position="27"/>
    </location>
    <ligand>
        <name>Mg(2+)</name>
        <dbReference type="ChEBI" id="CHEBI:18420"/>
    </ligand>
</feature>
<feature type="binding site" evidence="5">
    <location>
        <position position="85"/>
    </location>
    <ligand>
        <name>Mg(2+)</name>
        <dbReference type="ChEBI" id="CHEBI:18420"/>
    </ligand>
</feature>
<feature type="disulfide bond" evidence="3">
    <location>
        <begin position="45"/>
        <end position="51"/>
    </location>
</feature>
<feature type="disulfide bond" evidence="3">
    <location>
        <begin position="47"/>
        <end position="193"/>
    </location>
</feature>
<feature type="non-terminal residue">
    <location>
        <position position="1"/>
    </location>
</feature>
<comment type="function">
    <text evidence="1 3">Dermonecrotic toxins cleave the phosphodiester linkage between the phosphate and headgroup of certain phospholipids (sphingolipid and lysolipid substrates), forming an alcohol (often choline) and a cyclic phosphate (By similarity). This toxin acts on sphingomyelin (SM) (By similarity). It may also act on ceramide phosphoethanolamine (CPE), lysophosphatidylcholine (LPC) and lysophosphatidylethanolamine (LPE), but not on lysophosphatidylserine (LPS), and lysophosphatidylglycerol (LPG) (By similarity). It acts by transphosphatidylation, releasing exclusively cyclic phosphate products as second products (By similarity). Induces dermonecrosis, hemolysis, increased vascular permeability, edema, inflammatory response, and platelet aggregation (By similarity).</text>
</comment>
<comment type="catalytic activity">
    <reaction evidence="1">
        <text>an N-(acyl)-sphingosylphosphocholine = an N-(acyl)-sphingosyl-1,3-cyclic phosphate + choline</text>
        <dbReference type="Rhea" id="RHEA:60652"/>
        <dbReference type="ChEBI" id="CHEBI:15354"/>
        <dbReference type="ChEBI" id="CHEBI:64583"/>
        <dbReference type="ChEBI" id="CHEBI:143892"/>
    </reaction>
</comment>
<comment type="catalytic activity">
    <reaction evidence="1">
        <text>an N-(acyl)-sphingosylphosphoethanolamine = an N-(acyl)-sphingosyl-1,3-cyclic phosphate + ethanolamine</text>
        <dbReference type="Rhea" id="RHEA:60648"/>
        <dbReference type="ChEBI" id="CHEBI:57603"/>
        <dbReference type="ChEBI" id="CHEBI:143891"/>
        <dbReference type="ChEBI" id="CHEBI:143892"/>
    </reaction>
</comment>
<comment type="catalytic activity">
    <reaction evidence="1">
        <text>a 1-acyl-sn-glycero-3-phosphocholine = a 1-acyl-sn-glycero-2,3-cyclic phosphate + choline</text>
        <dbReference type="Rhea" id="RHEA:60700"/>
        <dbReference type="ChEBI" id="CHEBI:15354"/>
        <dbReference type="ChEBI" id="CHEBI:58168"/>
        <dbReference type="ChEBI" id="CHEBI:143947"/>
    </reaction>
</comment>
<comment type="catalytic activity">
    <reaction evidence="1">
        <text>a 1-acyl-sn-glycero-3-phosphoethanolamine = a 1-acyl-sn-glycero-2,3-cyclic phosphate + ethanolamine</text>
        <dbReference type="Rhea" id="RHEA:60704"/>
        <dbReference type="ChEBI" id="CHEBI:57603"/>
        <dbReference type="ChEBI" id="CHEBI:64381"/>
        <dbReference type="ChEBI" id="CHEBI:143947"/>
    </reaction>
</comment>
<comment type="cofactor">
    <cofactor evidence="5">
        <name>Mg(2+)</name>
        <dbReference type="ChEBI" id="CHEBI:18420"/>
    </cofactor>
    <text evidence="5">Binds 1 Mg(2+) ion per subunit.</text>
</comment>
<comment type="subcellular location">
    <subcellularLocation>
        <location evidence="8">Secreted</location>
    </subcellularLocation>
</comment>
<comment type="tissue specificity">
    <text evidence="8">Expressed by the venom gland.</text>
</comment>
<comment type="similarity">
    <text evidence="7">Belongs to the arthropod phospholipase D family. Class II subfamily.</text>
</comment>
<comment type="caution">
    <text evidence="1 2 4">The most common activity assay for dermonecrotic toxins detects enzymatic activity by monitoring choline release from substrate. Liberation of choline from sphingomyelin (SM) or lysophosphatidylcholine (LPC) is commonly assumed to result from substrate hydrolysis, giving either ceramide-1-phosphate (C1P) or lysophosphatidic acid (LPA), respectively, as a second product. However, two studies from Lajoie and colleagues (2013 and 2015) report the observation of exclusive formation of cyclic phosphate products as second products, resulting from intramolecular transphosphatidylation. Cyclic phosphates have vastly different biological properties from their monoester counterparts, and they may be relevant to the pathology of brown spider envenomation.</text>
</comment>
<keyword id="KW-0204">Cytolysis</keyword>
<keyword id="KW-1061">Dermonecrotic toxin</keyword>
<keyword id="KW-1015">Disulfide bond</keyword>
<keyword id="KW-0354">Hemolysis</keyword>
<keyword id="KW-0442">Lipid degradation</keyword>
<keyword id="KW-0443">Lipid metabolism</keyword>
<keyword id="KW-0456">Lyase</keyword>
<keyword id="KW-0460">Magnesium</keyword>
<keyword id="KW-0479">Metal-binding</keyword>
<keyword id="KW-0964">Secreted</keyword>
<keyword id="KW-0800">Toxin</keyword>
<dbReference type="EC" id="4.6.1.-" evidence="4"/>
<dbReference type="EMBL" id="FJ171463">
    <property type="protein sequence ID" value="ACN48959.2"/>
    <property type="molecule type" value="mRNA"/>
</dbReference>
<dbReference type="SMR" id="C0JB28"/>
<dbReference type="GO" id="GO:0005576">
    <property type="term" value="C:extracellular region"/>
    <property type="evidence" value="ECO:0007669"/>
    <property type="project" value="UniProtKB-SubCell"/>
</dbReference>
<dbReference type="GO" id="GO:0016829">
    <property type="term" value="F:lyase activity"/>
    <property type="evidence" value="ECO:0007669"/>
    <property type="project" value="UniProtKB-KW"/>
</dbReference>
<dbReference type="GO" id="GO:0046872">
    <property type="term" value="F:metal ion binding"/>
    <property type="evidence" value="ECO:0007669"/>
    <property type="project" value="UniProtKB-KW"/>
</dbReference>
<dbReference type="GO" id="GO:0008081">
    <property type="term" value="F:phosphoric diester hydrolase activity"/>
    <property type="evidence" value="ECO:0007669"/>
    <property type="project" value="InterPro"/>
</dbReference>
<dbReference type="GO" id="GO:0090729">
    <property type="term" value="F:toxin activity"/>
    <property type="evidence" value="ECO:0007669"/>
    <property type="project" value="UniProtKB-KW"/>
</dbReference>
<dbReference type="GO" id="GO:0031640">
    <property type="term" value="P:killing of cells of another organism"/>
    <property type="evidence" value="ECO:0007669"/>
    <property type="project" value="UniProtKB-KW"/>
</dbReference>
<dbReference type="GO" id="GO:0016042">
    <property type="term" value="P:lipid catabolic process"/>
    <property type="evidence" value="ECO:0007669"/>
    <property type="project" value="UniProtKB-KW"/>
</dbReference>
<dbReference type="CDD" id="cd08576">
    <property type="entry name" value="GDPD_like_SMaseD_PLD"/>
    <property type="match status" value="1"/>
</dbReference>
<dbReference type="Gene3D" id="3.20.20.190">
    <property type="entry name" value="Phosphatidylinositol (PI) phosphodiesterase"/>
    <property type="match status" value="1"/>
</dbReference>
<dbReference type="InterPro" id="IPR017946">
    <property type="entry name" value="PLC-like_Pdiesterase_TIM-brl"/>
</dbReference>
<dbReference type="SUPFAM" id="SSF51695">
    <property type="entry name" value="PLC-like phosphodiesterases"/>
    <property type="match status" value="1"/>
</dbReference>
<evidence type="ECO:0000250" key="1">
    <source>
        <dbReference type="UniProtKB" id="A0A0D4WTV1"/>
    </source>
</evidence>
<evidence type="ECO:0000250" key="2">
    <source>
        <dbReference type="UniProtKB" id="A0A0D4WV12"/>
    </source>
</evidence>
<evidence type="ECO:0000250" key="3">
    <source>
        <dbReference type="UniProtKB" id="P0CE80"/>
    </source>
</evidence>
<evidence type="ECO:0000250" key="4">
    <source>
        <dbReference type="UniProtKB" id="Q4ZFU2"/>
    </source>
</evidence>
<evidence type="ECO:0000250" key="5">
    <source>
        <dbReference type="UniProtKB" id="Q8I914"/>
    </source>
</evidence>
<evidence type="ECO:0000303" key="6">
    <source>
    </source>
</evidence>
<evidence type="ECO:0000305" key="7"/>
<evidence type="ECO:0000305" key="8">
    <source>
    </source>
</evidence>
<sequence>WIMGHMVNKIEQINEFLDLGANSIEVDIAFDELGYPEYTYHGVPCDCKRYCTKSEKIDDFIEALSAATTPGNPKFRKELTLVVFDLKTGGFDASRMYKSGKAFAELIQFSYWKGSDDAGRAYIVLSLPKLDHYEFIKAFREHFDTSTFKNLLEERVGYDFSGNEDMGLTRVVLNKAGVNDREHVWQGDGITNCILRSLDRVKAAVAIRDSATGYINKVYFWTIQAYSSVRDALNAEVDGIMTNEPDVITNVLKEDAFKDRFRLATYWDNPWETFKR</sequence>